<protein>
    <recommendedName>
        <fullName evidence="3">Glycine-betaine-binding protein</fullName>
    </recommendedName>
</protein>
<proteinExistence type="evidence at protein level"/>
<gene>
    <name evidence="4" type="ordered locus">PA3889</name>
</gene>
<comment type="function">
    <text evidence="2">Binds glycine-betaine.</text>
</comment>
<comment type="subcellular location">
    <subcellularLocation>
        <location evidence="3">Periplasm</location>
    </subcellularLocation>
</comment>
<comment type="similarity">
    <text evidence="3">Belongs to the OsmX family.</text>
</comment>
<name>GLBBP_PSEAE</name>
<evidence type="ECO:0000255" key="1"/>
<evidence type="ECO:0000269" key="2">
    <source>
    </source>
</evidence>
<evidence type="ECO:0000305" key="3"/>
<evidence type="ECO:0000312" key="4">
    <source>
        <dbReference type="EMBL" id="AAG07276.1"/>
    </source>
</evidence>
<feature type="signal peptide" evidence="1">
    <location>
        <begin position="1"/>
        <end position="23"/>
    </location>
</feature>
<feature type="chain" id="PRO_5004326868" description="Glycine-betaine-binding protein" evidence="1">
    <location>
        <begin position="24"/>
        <end position="311"/>
    </location>
</feature>
<sequence>MNRLIRSLCLACAGLFAAGLAQAETLRIGGKTFTEQRILTAITAQFLQKRGYDVTVTTGLGSTLARAAQESGQLDIVWEYTGSSLIVYNHIDEKLDAAASYRRVKQLDEAQGLVWLKPTRFNNTYALAMPEEQAEHLGIQSVSDLARVLAEQQEAEPGSTHLFAMDPEFAGRPDGLGPMSELYGLHFTRNDIRQMDAGLVYTALKNRQVFLGLVYTTDGRLKDFKLRVLKDDKQYFPFYNAAPVVRKEVMQRHPEFATLFDPIIERLDDATMQALNARVDIEQQTPQKVAADFLREHHLLDDGQAGQGGSQ</sequence>
<accession>Q9HXC4</accession>
<keyword id="KW-0574">Periplasm</keyword>
<keyword id="KW-1185">Reference proteome</keyword>
<keyword id="KW-0732">Signal</keyword>
<keyword id="KW-0813">Transport</keyword>
<organism>
    <name type="scientific">Pseudomonas aeruginosa (strain ATCC 15692 / DSM 22644 / CIP 104116 / JCM 14847 / LMG 12228 / 1C / PRS 101 / PAO1)</name>
    <dbReference type="NCBI Taxonomy" id="208964"/>
    <lineage>
        <taxon>Bacteria</taxon>
        <taxon>Pseudomonadati</taxon>
        <taxon>Pseudomonadota</taxon>
        <taxon>Gammaproteobacteria</taxon>
        <taxon>Pseudomonadales</taxon>
        <taxon>Pseudomonadaceae</taxon>
        <taxon>Pseudomonas</taxon>
    </lineage>
</organism>
<dbReference type="EMBL" id="AE004091">
    <property type="protein sequence ID" value="AAG07276.1"/>
    <property type="molecule type" value="Genomic_DNA"/>
</dbReference>
<dbReference type="PIR" id="E83159">
    <property type="entry name" value="E83159"/>
</dbReference>
<dbReference type="RefSeq" id="NP_252578.1">
    <property type="nucleotide sequence ID" value="NC_002516.2"/>
</dbReference>
<dbReference type="RefSeq" id="WP_003113769.1">
    <property type="nucleotide sequence ID" value="NZ_QZGE01000001.1"/>
</dbReference>
<dbReference type="SMR" id="Q9HXC4"/>
<dbReference type="FunCoup" id="Q9HXC4">
    <property type="interactions" value="186"/>
</dbReference>
<dbReference type="STRING" id="208964.PA3889"/>
<dbReference type="PaxDb" id="208964-PA3889"/>
<dbReference type="DNASU" id="878805"/>
<dbReference type="GeneID" id="878805"/>
<dbReference type="KEGG" id="pae:PA3889"/>
<dbReference type="PATRIC" id="fig|208964.12.peg.4073"/>
<dbReference type="PseudoCAP" id="PA3889"/>
<dbReference type="HOGENOM" id="CLU_038355_1_0_6"/>
<dbReference type="InParanoid" id="Q9HXC4"/>
<dbReference type="OrthoDB" id="9781705at2"/>
<dbReference type="PhylomeDB" id="Q9HXC4"/>
<dbReference type="BioCyc" id="PAER208964:G1FZ6-3962-MONOMER"/>
<dbReference type="Proteomes" id="UP000002438">
    <property type="component" value="Chromosome"/>
</dbReference>
<dbReference type="GO" id="GO:0043190">
    <property type="term" value="C:ATP-binding cassette (ABC) transporter complex"/>
    <property type="evidence" value="ECO:0000250"/>
    <property type="project" value="PseudoCAP"/>
</dbReference>
<dbReference type="GO" id="GO:0042597">
    <property type="term" value="C:periplasmic space"/>
    <property type="evidence" value="ECO:0000250"/>
    <property type="project" value="PseudoCAP"/>
</dbReference>
<dbReference type="GO" id="GO:0015226">
    <property type="term" value="F:carnitine transmembrane transporter activity"/>
    <property type="evidence" value="ECO:0000250"/>
    <property type="project" value="PseudoCAP"/>
</dbReference>
<dbReference type="GO" id="GO:0015838">
    <property type="term" value="P:amino-acid betaine transport"/>
    <property type="evidence" value="ECO:0000250"/>
    <property type="project" value="PseudoCAP"/>
</dbReference>
<dbReference type="GO" id="GO:0071475">
    <property type="term" value="P:cellular hyperosmotic salinity response"/>
    <property type="evidence" value="ECO:0000250"/>
    <property type="project" value="PseudoCAP"/>
</dbReference>
<dbReference type="GO" id="GO:0031460">
    <property type="term" value="P:glycine betaine transport"/>
    <property type="evidence" value="ECO:0000250"/>
    <property type="project" value="PseudoCAP"/>
</dbReference>
<dbReference type="CDD" id="cd13611">
    <property type="entry name" value="PBP2_YehZ"/>
    <property type="match status" value="1"/>
</dbReference>
<dbReference type="Gene3D" id="3.40.190.120">
    <property type="entry name" value="Osmoprotection protein (prox), domain 2"/>
    <property type="match status" value="1"/>
</dbReference>
<dbReference type="Gene3D" id="3.40.190.10">
    <property type="entry name" value="Periplasmic binding protein-like II"/>
    <property type="match status" value="1"/>
</dbReference>
<dbReference type="InterPro" id="IPR007210">
    <property type="entry name" value="ABC_Gly_betaine_transp_sub-bd"/>
</dbReference>
<dbReference type="PANTHER" id="PTHR30006:SF15">
    <property type="entry name" value="IRON-UTILIZATION PERIPLASMIC PROTEIN"/>
    <property type="match status" value="1"/>
</dbReference>
<dbReference type="PANTHER" id="PTHR30006">
    <property type="entry name" value="THIAMINE-BINDING PERIPLASMIC PROTEIN-RELATED"/>
    <property type="match status" value="1"/>
</dbReference>
<dbReference type="Pfam" id="PF04069">
    <property type="entry name" value="OpuAC"/>
    <property type="match status" value="1"/>
</dbReference>
<dbReference type="SUPFAM" id="SSF53850">
    <property type="entry name" value="Periplasmic binding protein-like II"/>
    <property type="match status" value="1"/>
</dbReference>
<reference key="1">
    <citation type="journal article" date="2000" name="Nature">
        <title>Complete genome sequence of Pseudomonas aeruginosa PAO1, an opportunistic pathogen.</title>
        <authorList>
            <person name="Stover C.K."/>
            <person name="Pham X.-Q.T."/>
            <person name="Erwin A.L."/>
            <person name="Mizoguchi S.D."/>
            <person name="Warrener P."/>
            <person name="Hickey M.J."/>
            <person name="Brinkman F.S.L."/>
            <person name="Hufnagle W.O."/>
            <person name="Kowalik D.J."/>
            <person name="Lagrou M."/>
            <person name="Garber R.L."/>
            <person name="Goltry L."/>
            <person name="Tolentino E."/>
            <person name="Westbrock-Wadman S."/>
            <person name="Yuan Y."/>
            <person name="Brody L.L."/>
            <person name="Coulter S.N."/>
            <person name="Folger K.R."/>
            <person name="Kas A."/>
            <person name="Larbig K."/>
            <person name="Lim R.M."/>
            <person name="Smith K.A."/>
            <person name="Spencer D.H."/>
            <person name="Wong G.K.-S."/>
            <person name="Wu Z."/>
            <person name="Paulsen I.T."/>
            <person name="Reizer J."/>
            <person name="Saier M.H. Jr."/>
            <person name="Hancock R.E.W."/>
            <person name="Lory S."/>
            <person name="Olson M.V."/>
        </authorList>
    </citation>
    <scope>NUCLEOTIDE SEQUENCE [LARGE SCALE GENOMIC DNA]</scope>
    <source>
        <strain>ATCC 15692 / DSM 22644 / CIP 104116 / JCM 14847 / LMG 12228 / 1C / PRS 101 / PAO1</strain>
    </source>
</reference>
<reference key="2">
    <citation type="journal article" date="2019" name="Int. J. Mol. Sci.">
        <title>Determination of Ligand Profiles for Pseudomonas aeruginosa Solute Binding Proteins.</title>
        <authorList>
            <person name="Fernandez M."/>
            <person name="Rico-Jimenez M."/>
            <person name="Ortega A."/>
            <person name="Daddaoua A."/>
            <person name="Garcia Garcia A.I."/>
            <person name="Martin-Mora D."/>
            <person name="Torres N.M."/>
            <person name="Tajuelo A."/>
            <person name="Matilla M.A."/>
            <person name="Krell T."/>
        </authorList>
    </citation>
    <scope>FUNCTION AS A BINDING PROTEIN</scope>
    <source>
        <strain>ATCC 15692 / DSM 22644 / CIP 104116 / JCM 14847 / LMG 12228 / 1C / PRS 101 / PAO1</strain>
    </source>
</reference>